<sequence>MRRHSTRKTVARVAVVALAVGVLAGCNTFKRLSEIGDGPAMSGVDNPTLRPDYRPVSMPMPAPMVAEPNPSSLWVPGARSFFKDQRAGEVGDLLTVIVDISNEKATFANNLSRTRGNKEGANLTSFLGFEGTLADVLPDGVDPASLTSFGSDSKHTGNGSMARSETVSMRLAAVVLQILPNGNFVIAGKQEVRVNGELRELTVTGVIRPEDIRSDNTIFWHQIAEARISYGGRGTVTDMVEPRYGQQVYDILFPF</sequence>
<keyword id="KW-0975">Bacterial flagellum</keyword>
<keyword id="KW-0998">Cell outer membrane</keyword>
<keyword id="KW-0449">Lipoprotein</keyword>
<keyword id="KW-0472">Membrane</keyword>
<keyword id="KW-0564">Palmitate</keyword>
<keyword id="KW-1185">Reference proteome</keyword>
<keyword id="KW-0732">Signal</keyword>
<dbReference type="EMBL" id="CP000230">
    <property type="protein sequence ID" value="ABC23642.1"/>
    <property type="molecule type" value="Genomic_DNA"/>
</dbReference>
<dbReference type="RefSeq" id="WP_011390472.1">
    <property type="nucleotide sequence ID" value="NC_007643.1"/>
</dbReference>
<dbReference type="RefSeq" id="YP_427929.1">
    <property type="nucleotide sequence ID" value="NC_007643.1"/>
</dbReference>
<dbReference type="SMR" id="Q2RQF3"/>
<dbReference type="STRING" id="269796.Rru_A2845"/>
<dbReference type="EnsemblBacteria" id="ABC23642">
    <property type="protein sequence ID" value="ABC23642"/>
    <property type="gene ID" value="Rru_A2845"/>
</dbReference>
<dbReference type="KEGG" id="rru:Rru_A2845"/>
<dbReference type="PATRIC" id="fig|269796.9.peg.2951"/>
<dbReference type="eggNOG" id="COG2063">
    <property type="taxonomic scope" value="Bacteria"/>
</dbReference>
<dbReference type="HOGENOM" id="CLU_069313_1_2_5"/>
<dbReference type="PhylomeDB" id="Q2RQF3"/>
<dbReference type="Proteomes" id="UP000001929">
    <property type="component" value="Chromosome"/>
</dbReference>
<dbReference type="GO" id="GO:0009427">
    <property type="term" value="C:bacterial-type flagellum basal body, distal rod, L ring"/>
    <property type="evidence" value="ECO:0007669"/>
    <property type="project" value="InterPro"/>
</dbReference>
<dbReference type="GO" id="GO:0009279">
    <property type="term" value="C:cell outer membrane"/>
    <property type="evidence" value="ECO:0007669"/>
    <property type="project" value="UniProtKB-SubCell"/>
</dbReference>
<dbReference type="GO" id="GO:0003774">
    <property type="term" value="F:cytoskeletal motor activity"/>
    <property type="evidence" value="ECO:0007669"/>
    <property type="project" value="InterPro"/>
</dbReference>
<dbReference type="GO" id="GO:0071973">
    <property type="term" value="P:bacterial-type flagellum-dependent cell motility"/>
    <property type="evidence" value="ECO:0007669"/>
    <property type="project" value="InterPro"/>
</dbReference>
<dbReference type="HAMAP" id="MF_00415">
    <property type="entry name" value="FlgH"/>
    <property type="match status" value="1"/>
</dbReference>
<dbReference type="InterPro" id="IPR000527">
    <property type="entry name" value="Flag_Lring"/>
</dbReference>
<dbReference type="NCBIfam" id="NF001305">
    <property type="entry name" value="PRK00249.1-5"/>
    <property type="match status" value="1"/>
</dbReference>
<dbReference type="PANTHER" id="PTHR34933">
    <property type="entry name" value="FLAGELLAR L-RING PROTEIN"/>
    <property type="match status" value="1"/>
</dbReference>
<dbReference type="PANTHER" id="PTHR34933:SF1">
    <property type="entry name" value="FLAGELLAR L-RING PROTEIN"/>
    <property type="match status" value="1"/>
</dbReference>
<dbReference type="Pfam" id="PF02107">
    <property type="entry name" value="FlgH"/>
    <property type="match status" value="1"/>
</dbReference>
<dbReference type="PRINTS" id="PR01008">
    <property type="entry name" value="FLGLRINGFLGH"/>
</dbReference>
<dbReference type="PROSITE" id="PS51257">
    <property type="entry name" value="PROKAR_LIPOPROTEIN"/>
    <property type="match status" value="1"/>
</dbReference>
<organism>
    <name type="scientific">Rhodospirillum rubrum (strain ATCC 11170 / ATH 1.1.1 / DSM 467 / LMG 4362 / NCIMB 8255 / S1)</name>
    <dbReference type="NCBI Taxonomy" id="269796"/>
    <lineage>
        <taxon>Bacteria</taxon>
        <taxon>Pseudomonadati</taxon>
        <taxon>Pseudomonadota</taxon>
        <taxon>Alphaproteobacteria</taxon>
        <taxon>Rhodospirillales</taxon>
        <taxon>Rhodospirillaceae</taxon>
        <taxon>Rhodospirillum</taxon>
    </lineage>
</organism>
<evidence type="ECO:0000255" key="1">
    <source>
        <dbReference type="HAMAP-Rule" id="MF_00415"/>
    </source>
</evidence>
<feature type="signal peptide" evidence="1">
    <location>
        <begin position="1"/>
        <end position="25"/>
    </location>
</feature>
<feature type="chain" id="PRO_0000236833" description="Flagellar L-ring protein">
    <location>
        <begin position="26"/>
        <end position="255"/>
    </location>
</feature>
<feature type="lipid moiety-binding region" description="N-palmitoyl cysteine" evidence="1">
    <location>
        <position position="26"/>
    </location>
</feature>
<feature type="lipid moiety-binding region" description="S-diacylglycerol cysteine" evidence="1">
    <location>
        <position position="26"/>
    </location>
</feature>
<accession>Q2RQF3</accession>
<name>FLGH_RHORT</name>
<gene>
    <name evidence="1" type="primary">flgH</name>
    <name type="ordered locus">Rru_A2845</name>
</gene>
<protein>
    <recommendedName>
        <fullName evidence="1">Flagellar L-ring protein</fullName>
    </recommendedName>
    <alternativeName>
        <fullName evidence="1">Basal body L-ring protein</fullName>
    </alternativeName>
</protein>
<comment type="function">
    <text evidence="1">Assembles around the rod to form the L-ring and probably protects the motor/basal body from shearing forces during rotation.</text>
</comment>
<comment type="subunit">
    <text evidence="1">The basal body constitutes a major portion of the flagellar organelle and consists of four rings (L,P,S, and M) mounted on a central rod.</text>
</comment>
<comment type="subcellular location">
    <subcellularLocation>
        <location evidence="1">Cell outer membrane</location>
        <topology evidence="1">Lipid-anchor</topology>
    </subcellularLocation>
    <subcellularLocation>
        <location evidence="1">Bacterial flagellum basal body</location>
    </subcellularLocation>
</comment>
<comment type="similarity">
    <text evidence="1">Belongs to the FlgH family.</text>
</comment>
<reference key="1">
    <citation type="journal article" date="2011" name="Stand. Genomic Sci.">
        <title>Complete genome sequence of Rhodospirillum rubrum type strain (S1).</title>
        <authorList>
            <person name="Munk A.C."/>
            <person name="Copeland A."/>
            <person name="Lucas S."/>
            <person name="Lapidus A."/>
            <person name="Del Rio T.G."/>
            <person name="Barry K."/>
            <person name="Detter J.C."/>
            <person name="Hammon N."/>
            <person name="Israni S."/>
            <person name="Pitluck S."/>
            <person name="Brettin T."/>
            <person name="Bruce D."/>
            <person name="Han C."/>
            <person name="Tapia R."/>
            <person name="Gilna P."/>
            <person name="Schmutz J."/>
            <person name="Larimer F."/>
            <person name="Land M."/>
            <person name="Kyrpides N.C."/>
            <person name="Mavromatis K."/>
            <person name="Richardson P."/>
            <person name="Rohde M."/>
            <person name="Goeker M."/>
            <person name="Klenk H.P."/>
            <person name="Zhang Y."/>
            <person name="Roberts G.P."/>
            <person name="Reslewic S."/>
            <person name="Schwartz D.C."/>
        </authorList>
    </citation>
    <scope>NUCLEOTIDE SEQUENCE [LARGE SCALE GENOMIC DNA]</scope>
    <source>
        <strain>ATCC 11170 / ATH 1.1.1 / DSM 467 / LMG 4362 / NCIMB 8255 / S1</strain>
    </source>
</reference>
<proteinExistence type="inferred from homology"/>